<feature type="chain" id="PRO_0000103765" description="Uncharacterized protein Rv0968">
    <location>
        <begin position="1"/>
        <end position="98"/>
    </location>
</feature>
<feature type="region of interest" description="Disordered" evidence="1">
    <location>
        <begin position="77"/>
        <end position="98"/>
    </location>
</feature>
<gene>
    <name type="ordered locus">Rv0968</name>
    <name type="ORF">MTCY10D7.06c</name>
</gene>
<protein>
    <recommendedName>
        <fullName>Uncharacterized protein Rv0968</fullName>
    </recommendedName>
</protein>
<comment type="induction">
    <text evidence="2">Highly up-regulated during the early stages of invasion of the human blood-brain barrier.</text>
</comment>
<comment type="similarity">
    <text evidence="3">To M.tuberculosis Rv1991c and Rv3269.</text>
</comment>
<accession>P9WKL9</accession>
<accession>L0T889</accession>
<accession>P64779</accession>
<accession>P71542</accession>
<keyword id="KW-1185">Reference proteome</keyword>
<name>Y968_MYCTU</name>
<dbReference type="EMBL" id="AL123456">
    <property type="protein sequence ID" value="CCP43717.1"/>
    <property type="molecule type" value="Genomic_DNA"/>
</dbReference>
<dbReference type="PIR" id="F70718">
    <property type="entry name" value="F70718"/>
</dbReference>
<dbReference type="RefSeq" id="NP_215483.1">
    <property type="nucleotide sequence ID" value="NC_000962.3"/>
</dbReference>
<dbReference type="RefSeq" id="WP_003404939.1">
    <property type="nucleotide sequence ID" value="NZ_NVQJ01000001.1"/>
</dbReference>
<dbReference type="SMR" id="P9WKL9"/>
<dbReference type="STRING" id="83332.Rv0968"/>
<dbReference type="PaxDb" id="83332-Rv0968"/>
<dbReference type="DNASU" id="885052"/>
<dbReference type="GeneID" id="885052"/>
<dbReference type="KEGG" id="mtu:Rv0968"/>
<dbReference type="KEGG" id="mtv:RVBD_0968"/>
<dbReference type="TubercuList" id="Rv0968"/>
<dbReference type="eggNOG" id="ENOG5030ARM">
    <property type="taxonomic scope" value="Bacteria"/>
</dbReference>
<dbReference type="InParanoid" id="P9WKL9"/>
<dbReference type="OrthoDB" id="3579065at2"/>
<dbReference type="PhylomeDB" id="P9WKL9"/>
<dbReference type="Proteomes" id="UP000001584">
    <property type="component" value="Chromosome"/>
</dbReference>
<dbReference type="GO" id="GO:0009274">
    <property type="term" value="C:peptidoglycan-based cell wall"/>
    <property type="evidence" value="ECO:0007005"/>
    <property type="project" value="MTBBASE"/>
</dbReference>
<dbReference type="GO" id="GO:0005886">
    <property type="term" value="C:plasma membrane"/>
    <property type="evidence" value="ECO:0007005"/>
    <property type="project" value="MTBBASE"/>
</dbReference>
<dbReference type="InterPro" id="IPR009963">
    <property type="entry name" value="DUF1490"/>
</dbReference>
<dbReference type="Pfam" id="PF07371">
    <property type="entry name" value="DUF1490"/>
    <property type="match status" value="1"/>
</dbReference>
<organism>
    <name type="scientific">Mycobacterium tuberculosis (strain ATCC 25618 / H37Rv)</name>
    <dbReference type="NCBI Taxonomy" id="83332"/>
    <lineage>
        <taxon>Bacteria</taxon>
        <taxon>Bacillati</taxon>
        <taxon>Actinomycetota</taxon>
        <taxon>Actinomycetes</taxon>
        <taxon>Mycobacteriales</taxon>
        <taxon>Mycobacteriaceae</taxon>
        <taxon>Mycobacterium</taxon>
        <taxon>Mycobacterium tuberculosis complex</taxon>
    </lineage>
</organism>
<sequence length="98" mass="10264">MVWHGFLAKAVPTVVTGAVGVAAYEALRKMVVKAPLRAATVSVAAWGIRLAREAERKAGESAEQARLMFADVLAEASERAGEEVPPLAVAGSDDGHDH</sequence>
<reference key="1">
    <citation type="journal article" date="1998" name="Nature">
        <title>Deciphering the biology of Mycobacterium tuberculosis from the complete genome sequence.</title>
        <authorList>
            <person name="Cole S.T."/>
            <person name="Brosch R."/>
            <person name="Parkhill J."/>
            <person name="Garnier T."/>
            <person name="Churcher C.M."/>
            <person name="Harris D.E."/>
            <person name="Gordon S.V."/>
            <person name="Eiglmeier K."/>
            <person name="Gas S."/>
            <person name="Barry C.E. III"/>
            <person name="Tekaia F."/>
            <person name="Badcock K."/>
            <person name="Basham D."/>
            <person name="Brown D."/>
            <person name="Chillingworth T."/>
            <person name="Connor R."/>
            <person name="Davies R.M."/>
            <person name="Devlin K."/>
            <person name="Feltwell T."/>
            <person name="Gentles S."/>
            <person name="Hamlin N."/>
            <person name="Holroyd S."/>
            <person name="Hornsby T."/>
            <person name="Jagels K."/>
            <person name="Krogh A."/>
            <person name="McLean J."/>
            <person name="Moule S."/>
            <person name="Murphy L.D."/>
            <person name="Oliver S."/>
            <person name="Osborne J."/>
            <person name="Quail M.A."/>
            <person name="Rajandream M.A."/>
            <person name="Rogers J."/>
            <person name="Rutter S."/>
            <person name="Seeger K."/>
            <person name="Skelton S."/>
            <person name="Squares S."/>
            <person name="Squares R."/>
            <person name="Sulston J.E."/>
            <person name="Taylor K."/>
            <person name="Whitehead S."/>
            <person name="Barrell B.G."/>
        </authorList>
    </citation>
    <scope>NUCLEOTIDE SEQUENCE [LARGE SCALE GENOMIC DNA]</scope>
    <source>
        <strain>ATCC 25618 / H37Rv</strain>
    </source>
</reference>
<reference key="2">
    <citation type="journal article" date="2006" name="J. Infect. Dis.">
        <title>Mycobacterium tuberculosis invasion and traversal across an in vitro human blood-brain barrier as a pathogenic mechanism for central nervous system tuberculosis.</title>
        <authorList>
            <person name="Jain S.K."/>
            <person name="Paul-Satyaseela M."/>
            <person name="Lamichhane G."/>
            <person name="Kim K.S."/>
            <person name="Bishai W.R."/>
        </authorList>
    </citation>
    <scope>INDUCTION</scope>
    <source>
        <strain>ATCC 25618 / H37Rv</strain>
    </source>
</reference>
<reference key="3">
    <citation type="journal article" date="2011" name="Mol. Cell. Proteomics">
        <title>Proteogenomic analysis of Mycobacterium tuberculosis by high resolution mass spectrometry.</title>
        <authorList>
            <person name="Kelkar D.S."/>
            <person name="Kumar D."/>
            <person name="Kumar P."/>
            <person name="Balakrishnan L."/>
            <person name="Muthusamy B."/>
            <person name="Yadav A.K."/>
            <person name="Shrivastava P."/>
            <person name="Marimuthu A."/>
            <person name="Anand S."/>
            <person name="Sundaram H."/>
            <person name="Kingsbury R."/>
            <person name="Harsha H.C."/>
            <person name="Nair B."/>
            <person name="Prasad T.S."/>
            <person name="Chauhan D.S."/>
            <person name="Katoch K."/>
            <person name="Katoch V.M."/>
            <person name="Kumar P."/>
            <person name="Chaerkady R."/>
            <person name="Ramachandran S."/>
            <person name="Dash D."/>
            <person name="Pandey A."/>
        </authorList>
    </citation>
    <scope>IDENTIFICATION BY MASS SPECTROMETRY [LARGE SCALE ANALYSIS]</scope>
    <source>
        <strain>ATCC 25618 / H37Rv</strain>
    </source>
</reference>
<evidence type="ECO:0000256" key="1">
    <source>
        <dbReference type="SAM" id="MobiDB-lite"/>
    </source>
</evidence>
<evidence type="ECO:0000269" key="2">
    <source>
    </source>
</evidence>
<evidence type="ECO:0000305" key="3"/>
<proteinExistence type="evidence at protein level"/>